<reference key="1">
    <citation type="journal article" date="1992" name="J. Biol. Chem.">
        <title>Purification, cDNA cloning, and expression of UDP-N-acetylglucosamine: beta-D-mannoside beta-1,4N-acetylglucosaminyltransferase III from rat kidney.</title>
        <authorList>
            <person name="Nishikawa A."/>
            <person name="Ihara Y."/>
            <person name="Hatakeyama M."/>
            <person name="Kangawa K."/>
            <person name="Taniguchi N."/>
        </authorList>
    </citation>
    <scope>NUCLEOTIDE SEQUENCE [MRNA]</scope>
    <scope>PROTEIN SEQUENCE OF 287-297; 447-453 AND 494-509</scope>
    <source>
        <strain>Donryu</strain>
        <tissue>Kidney</tissue>
    </source>
</reference>
<evidence type="ECO:0000250" key="1">
    <source>
        <dbReference type="UniProtKB" id="Q09327"/>
    </source>
</evidence>
<evidence type="ECO:0000250" key="2">
    <source>
        <dbReference type="UniProtKB" id="Q10470"/>
    </source>
</evidence>
<evidence type="ECO:0000255" key="3"/>
<evidence type="ECO:0000256" key="4">
    <source>
        <dbReference type="SAM" id="MobiDB-lite"/>
    </source>
</evidence>
<evidence type="ECO:0000305" key="5"/>
<proteinExistence type="evidence at protein level"/>
<name>MGAT3_RAT</name>
<dbReference type="EC" id="2.4.1.144"/>
<dbReference type="EMBL" id="D10852">
    <property type="protein sequence ID" value="BAA01625.1"/>
    <property type="status" value="ALT_INIT"/>
    <property type="molecule type" value="mRNA"/>
</dbReference>
<dbReference type="PIR" id="A43415">
    <property type="entry name" value="A43415"/>
</dbReference>
<dbReference type="RefSeq" id="NP_062112.2">
    <property type="nucleotide sequence ID" value="NM_019239.2"/>
</dbReference>
<dbReference type="RefSeq" id="XP_006242134.1">
    <property type="nucleotide sequence ID" value="XM_006242072.2"/>
</dbReference>
<dbReference type="RefSeq" id="XP_006242135.1">
    <property type="nucleotide sequence ID" value="XM_006242073.3"/>
</dbReference>
<dbReference type="RefSeq" id="XP_006242136.1">
    <property type="nucleotide sequence ID" value="XM_006242074.3"/>
</dbReference>
<dbReference type="RefSeq" id="XP_017450192.1">
    <property type="nucleotide sequence ID" value="XM_017594703.1"/>
</dbReference>
<dbReference type="FunCoup" id="Q02527">
    <property type="interactions" value="76"/>
</dbReference>
<dbReference type="STRING" id="10116.ENSRNOP00000023434"/>
<dbReference type="CAZy" id="GT17">
    <property type="family name" value="Glycosyltransferase Family 17"/>
</dbReference>
<dbReference type="GlyCosmos" id="Q02527">
    <property type="glycosylation" value="3 sites, No reported glycans"/>
</dbReference>
<dbReference type="GlyGen" id="Q02527">
    <property type="glycosylation" value="3 sites"/>
</dbReference>
<dbReference type="PhosphoSitePlus" id="Q02527"/>
<dbReference type="PaxDb" id="10116-ENSRNOP00000023434"/>
<dbReference type="Ensembl" id="ENSRNOT00000023434.3">
    <property type="protein sequence ID" value="ENSRNOP00000023434.4"/>
    <property type="gene ID" value="ENSRNOG00000017434.3"/>
</dbReference>
<dbReference type="Ensembl" id="ENSRNOT00000095447.1">
    <property type="protein sequence ID" value="ENSRNOP00000093292.1"/>
    <property type="gene ID" value="ENSRNOG00000017434.3"/>
</dbReference>
<dbReference type="Ensembl" id="ENSRNOT00000097844.1">
    <property type="protein sequence ID" value="ENSRNOP00000080479.1"/>
    <property type="gene ID" value="ENSRNOG00000017434.3"/>
</dbReference>
<dbReference type="Ensembl" id="ENSRNOT00000098313.1">
    <property type="protein sequence ID" value="ENSRNOP00000076545.1"/>
    <property type="gene ID" value="ENSRNOG00000017434.3"/>
</dbReference>
<dbReference type="Ensembl" id="ENSRNOT00000103460.1">
    <property type="protein sequence ID" value="ENSRNOP00000082492.1"/>
    <property type="gene ID" value="ENSRNOG00000017434.3"/>
</dbReference>
<dbReference type="Ensembl" id="ENSRNOT00000105515.1">
    <property type="protein sequence ID" value="ENSRNOP00000076485.1"/>
    <property type="gene ID" value="ENSRNOG00000017434.3"/>
</dbReference>
<dbReference type="Ensembl" id="ENSRNOT00000109650.1">
    <property type="protein sequence ID" value="ENSRNOP00000082287.1"/>
    <property type="gene ID" value="ENSRNOG00000017434.3"/>
</dbReference>
<dbReference type="Ensembl" id="ENSRNOT00000113053.1">
    <property type="protein sequence ID" value="ENSRNOP00000097179.1"/>
    <property type="gene ID" value="ENSRNOG00000017434.3"/>
</dbReference>
<dbReference type="Ensembl" id="ENSRNOT00000117804.1">
    <property type="protein sequence ID" value="ENSRNOP00000077338.1"/>
    <property type="gene ID" value="ENSRNOG00000017434.3"/>
</dbReference>
<dbReference type="Ensembl" id="ENSRNOT00000117832.1">
    <property type="protein sequence ID" value="ENSRNOP00000086583.1"/>
    <property type="gene ID" value="ENSRNOG00000017434.3"/>
</dbReference>
<dbReference type="GeneID" id="29582"/>
<dbReference type="KEGG" id="rno:29582"/>
<dbReference type="UCSC" id="RGD:3084">
    <property type="organism name" value="rat"/>
</dbReference>
<dbReference type="AGR" id="RGD:3084"/>
<dbReference type="CTD" id="4248"/>
<dbReference type="RGD" id="3084">
    <property type="gene designation" value="Mgat3"/>
</dbReference>
<dbReference type="eggNOG" id="ENOG502QUBY">
    <property type="taxonomic scope" value="Eukaryota"/>
</dbReference>
<dbReference type="GeneTree" id="ENSGT00390000008221"/>
<dbReference type="HOGENOM" id="CLU_029534_0_0_1"/>
<dbReference type="InParanoid" id="Q02527"/>
<dbReference type="OMA" id="QPEIIWR"/>
<dbReference type="OrthoDB" id="6474464at2759"/>
<dbReference type="PhylomeDB" id="Q02527"/>
<dbReference type="TreeFam" id="TF323781"/>
<dbReference type="BRENDA" id="2.4.1.144">
    <property type="organism ID" value="5301"/>
</dbReference>
<dbReference type="Reactome" id="R-RNO-975574">
    <property type="pathway name" value="Reactions specific to the hybrid N-glycan synthesis pathway"/>
</dbReference>
<dbReference type="UniPathway" id="UPA00378"/>
<dbReference type="PRO" id="PR:Q02527"/>
<dbReference type="Proteomes" id="UP000002494">
    <property type="component" value="Chromosome 7"/>
</dbReference>
<dbReference type="Bgee" id="ENSRNOG00000017434">
    <property type="expression patterns" value="Expressed in stomach and 17 other cell types or tissues"/>
</dbReference>
<dbReference type="GO" id="GO:0000139">
    <property type="term" value="C:Golgi membrane"/>
    <property type="evidence" value="ECO:0007669"/>
    <property type="project" value="UniProtKB-SubCell"/>
</dbReference>
<dbReference type="GO" id="GO:0005764">
    <property type="term" value="C:lysosome"/>
    <property type="evidence" value="ECO:0007669"/>
    <property type="project" value="GOC"/>
</dbReference>
<dbReference type="GO" id="GO:0003830">
    <property type="term" value="F:beta-1,4-mannosylglycoprotein 4-beta-N-acetylglucosaminyltransferase activity"/>
    <property type="evidence" value="ECO:0000250"/>
    <property type="project" value="UniProtKB"/>
</dbReference>
<dbReference type="GO" id="GO:0016757">
    <property type="term" value="F:glycosyltransferase activity"/>
    <property type="evidence" value="ECO:0000266"/>
    <property type="project" value="RGD"/>
</dbReference>
<dbReference type="GO" id="GO:0050435">
    <property type="term" value="P:amyloid-beta metabolic process"/>
    <property type="evidence" value="ECO:0000250"/>
    <property type="project" value="UniProtKB"/>
</dbReference>
<dbReference type="GO" id="GO:0034599">
    <property type="term" value="P:cellular response to oxidative stress"/>
    <property type="evidence" value="ECO:0000250"/>
    <property type="project" value="UniProtKB"/>
</dbReference>
<dbReference type="GO" id="GO:0050890">
    <property type="term" value="P:cognition"/>
    <property type="evidence" value="ECO:0000250"/>
    <property type="project" value="UniProtKB"/>
</dbReference>
<dbReference type="GO" id="GO:1905146">
    <property type="term" value="P:lysosomal protein catabolic process"/>
    <property type="evidence" value="ECO:0000266"/>
    <property type="project" value="RGD"/>
</dbReference>
<dbReference type="GO" id="GO:0006044">
    <property type="term" value="P:N-acetylglucosamine metabolic process"/>
    <property type="evidence" value="ECO:0000266"/>
    <property type="project" value="RGD"/>
</dbReference>
<dbReference type="GO" id="GO:1905166">
    <property type="term" value="P:negative regulation of lysosomal protein catabolic process"/>
    <property type="evidence" value="ECO:0000250"/>
    <property type="project" value="UniProtKB"/>
</dbReference>
<dbReference type="GO" id="GO:1902966">
    <property type="term" value="P:positive regulation of protein localization to early endosome"/>
    <property type="evidence" value="ECO:0000250"/>
    <property type="project" value="UniProtKB"/>
</dbReference>
<dbReference type="GO" id="GO:0008104">
    <property type="term" value="P:protein localization"/>
    <property type="evidence" value="ECO:0000250"/>
    <property type="project" value="UniProtKB"/>
</dbReference>
<dbReference type="GO" id="GO:1902946">
    <property type="term" value="P:protein localization to early endosome"/>
    <property type="evidence" value="ECO:0000266"/>
    <property type="project" value="RGD"/>
</dbReference>
<dbReference type="GO" id="GO:0006487">
    <property type="term" value="P:protein N-linked glycosylation"/>
    <property type="evidence" value="ECO:0000250"/>
    <property type="project" value="UniProtKB"/>
</dbReference>
<dbReference type="GO" id="GO:0030334">
    <property type="term" value="P:regulation of cell migration"/>
    <property type="evidence" value="ECO:0000250"/>
    <property type="project" value="UniProtKB"/>
</dbReference>
<dbReference type="InterPro" id="IPR006813">
    <property type="entry name" value="Glyco_trans_17"/>
</dbReference>
<dbReference type="PANTHER" id="PTHR12224:SF0">
    <property type="entry name" value="BETA-1,4-MANNOSYL-GLYCOPROTEIN 4-BETA-N-ACETYLGLUCOSAMINYLTRANSFERASE"/>
    <property type="match status" value="1"/>
</dbReference>
<dbReference type="PANTHER" id="PTHR12224">
    <property type="entry name" value="BETA-1,4-MANNOSYL-GLYCOPROTEIN BETA-1,4-N-ACETYLGLUCOSAMINYL-TRANSFERASE"/>
    <property type="match status" value="1"/>
</dbReference>
<dbReference type="Pfam" id="PF04724">
    <property type="entry name" value="Glyco_transf_17"/>
    <property type="match status" value="1"/>
</dbReference>
<organism>
    <name type="scientific">Rattus norvegicus</name>
    <name type="common">Rat</name>
    <dbReference type="NCBI Taxonomy" id="10116"/>
    <lineage>
        <taxon>Eukaryota</taxon>
        <taxon>Metazoa</taxon>
        <taxon>Chordata</taxon>
        <taxon>Craniata</taxon>
        <taxon>Vertebrata</taxon>
        <taxon>Euteleostomi</taxon>
        <taxon>Mammalia</taxon>
        <taxon>Eutheria</taxon>
        <taxon>Euarchontoglires</taxon>
        <taxon>Glires</taxon>
        <taxon>Rodentia</taxon>
        <taxon>Myomorpha</taxon>
        <taxon>Muroidea</taxon>
        <taxon>Muridae</taxon>
        <taxon>Murinae</taxon>
        <taxon>Rattus</taxon>
    </lineage>
</organism>
<sequence length="538" mass="62022">MKMRRYKLFLMFCMAGLCLISFLHFFKTLSYVTFPRELASLSPNLISSFFWNNAPVTPQASPEPGDPDLLRTPLYSHSPLLQPLSPSKATEELHRVDFVLPEDTTEYFVRTKAGGVCFKPGTRMLEKPSPGRTEEKTKVAEGSSVRGPARRPMRHVLSARERLGGRGTRRKWVECVCLPGWHGPSCGVPTVVQYSNLPTKERLVPREVPRRVINAININHEFDLLDVRFHELGDVVDAFVVCESNFTAYGEPRPLKFREMLTNGTFEYIRHKVLYVFLDHFPPGGRQDGWIADDYLRTFLTQDGVSRLRNLRPDDVFIIDDADEIPARDGVLFLKLYDGWTEPFAFHMRKSLYGFFWKQPGTLEVVSGCTIDMLQAVYGLDGIRLRRRQYYTMPNFRQYENRTGHILVQWSLGSPLHFAGWHCSWCFTPEGIYFKLVSAQNGDFPRWGDYEDKRDLNYIRSLIRTGGWFDGTQQEYPPADPSEHMYAPKYLLKNYDQFRYLLENPYREPKSTVEGGRRNQGSDGRSSAVRGKLDTTEG</sequence>
<accession>Q02527</accession>
<protein>
    <recommendedName>
        <fullName>Beta-1,4-mannosyl-glycoprotein 4-beta-N-acetylglucosaminyltransferase</fullName>
        <ecNumber>2.4.1.144</ecNumber>
    </recommendedName>
    <alternativeName>
        <fullName>N-glycosyl-oligosaccharide-glycoprotein N-acetylglucosaminyltransferase III</fullName>
        <shortName>GNT-III</shortName>
        <shortName>GlcNAc-T III</shortName>
        <shortName>N-acetylglucosaminyltransferase III</shortName>
    </alternativeName>
</protein>
<comment type="function">
    <text evidence="1 2">It is involved in the regulation of the biosynthesis and biological function of glycoprotein oligosaccharides. Catalyzes the addition of N-acetylglucosamine in beta 1-4 linkage to the beta-linked mannose of the trimannosyl core of N-linked sugar chains, called bisecting N-acetylglucosamine (GlcNAc). It is one of the most important enzymes involved in the regulation of the biosynthesis of glycoprotein oligosaccharides. The addition of this bisecting GlcNAc residue alters not only the composition, but also the conformation of the N-glycan. The introduction of the bisecting GlcNAc residue results in the suppression of further processing and elongation of N-glycans, precluding the formation of beta-1,6 GlcNAc branching, catalyzed by MGAT5 since it is unable to use the bisected oligosaccharide as a substrate. Addition of bisecting N-acetylglucosamine to CDH1/E-cadherin modulates CDH1 cell membrane location. Inhibits NeuAc-alpha-2,3-Gal-beta-1,4-GlcNAc- formation which modulates sialylation levels and plays a role in cell migration regulation (By similarity). In brain, addition of bisecting N-acetylglucosamine to BACE1 blocks its lysosomal targeting in response to oxidative stress and further degradation which increases its location to early endosome and the APP cleavage (By similarity).</text>
</comment>
<comment type="catalytic activity">
    <reaction>
        <text>N(4)-{beta-D-GlcNAc-(1-&gt;2)-alpha-D-Man-(1-&gt;3)-[beta-D-GlcNAc-(1-&gt;2)-alpha-D-Man-(1-&gt;6)]-beta-D-Man-(1-&gt;4)-beta-D-GlcNAc-(1-&gt;4)-beta-D-GlcNAc}-L-asparaginyl-[protein] + UDP-N-acetyl-alpha-D-glucosamine = N(4)-{beta-D-GlcNAc-(1-&gt;2)-alpha-D-Man-(1-&gt;3)-[beta-D-GlcNAc-(1-&gt;4)]-[beta-D-GlcNAc-(1-&gt;2)-alpha-D-Man-(1-&gt;6)]-beta-D-Man-(1-&gt;4)-beta-D-GlcNAc-(1-&gt;4)-beta-D-GlcNAc}-L-asparaginyl-[protein] + UDP + H(+)</text>
        <dbReference type="Rhea" id="RHEA:15509"/>
        <dbReference type="Rhea" id="RHEA-COMP:13526"/>
        <dbReference type="Rhea" id="RHEA-COMP:14371"/>
        <dbReference type="ChEBI" id="CHEBI:15378"/>
        <dbReference type="ChEBI" id="CHEBI:57705"/>
        <dbReference type="ChEBI" id="CHEBI:58223"/>
        <dbReference type="ChEBI" id="CHEBI:60651"/>
        <dbReference type="ChEBI" id="CHEBI:139504"/>
        <dbReference type="EC" id="2.4.1.144"/>
    </reaction>
</comment>
<comment type="pathway">
    <text>Protein modification; protein glycosylation.</text>
</comment>
<comment type="subunit">
    <text evidence="2">Interacts with MGAT4D.</text>
</comment>
<comment type="subcellular location">
    <subcellularLocation>
        <location>Golgi apparatus membrane</location>
        <topology>Single-pass type II membrane protein</topology>
    </subcellularLocation>
</comment>
<comment type="similarity">
    <text evidence="5">Belongs to the glycosyltransferase 17 family.</text>
</comment>
<comment type="sequence caution" evidence="5">
    <conflict type="erroneous initiation">
        <sequence resource="EMBL-CDS" id="BAA01625"/>
    </conflict>
    <text>Truncated N-terminus.</text>
</comment>
<gene>
    <name type="primary">Mgat3</name>
    <name type="synonym">Gnt3</name>
</gene>
<feature type="chain" id="PRO_0000188844" description="Beta-1,4-mannosyl-glycoprotein 4-beta-N-acetylglucosaminyltransferase">
    <location>
        <begin position="1"/>
        <end position="538"/>
    </location>
</feature>
<feature type="topological domain" description="Cytoplasmic" evidence="3">
    <location>
        <begin position="1"/>
        <end position="7"/>
    </location>
</feature>
<feature type="transmembrane region" description="Helical; Signal-anchor for type II membrane protein" evidence="3">
    <location>
        <begin position="8"/>
        <end position="23"/>
    </location>
</feature>
<feature type="topological domain" description="Lumenal" evidence="3">
    <location>
        <begin position="24"/>
        <end position="538"/>
    </location>
</feature>
<feature type="region of interest" description="Disordered" evidence="4">
    <location>
        <begin position="121"/>
        <end position="151"/>
    </location>
</feature>
<feature type="region of interest" description="Disordered" evidence="4">
    <location>
        <begin position="509"/>
        <end position="538"/>
    </location>
</feature>
<feature type="glycosylation site" description="N-linked (GlcNAc...) asparagine" evidence="3">
    <location>
        <position position="245"/>
    </location>
</feature>
<feature type="glycosylation site" description="N-linked (GlcNAc...) asparagine" evidence="3">
    <location>
        <position position="263"/>
    </location>
</feature>
<feature type="glycosylation site" description="N-linked (GlcNAc...) asparagine" evidence="3">
    <location>
        <position position="401"/>
    </location>
</feature>
<keyword id="KW-0903">Direct protein sequencing</keyword>
<keyword id="KW-0325">Glycoprotein</keyword>
<keyword id="KW-0328">Glycosyltransferase</keyword>
<keyword id="KW-0333">Golgi apparatus</keyword>
<keyword id="KW-0472">Membrane</keyword>
<keyword id="KW-1185">Reference proteome</keyword>
<keyword id="KW-0735">Signal-anchor</keyword>
<keyword id="KW-0808">Transferase</keyword>
<keyword id="KW-0812">Transmembrane</keyword>
<keyword id="KW-1133">Transmembrane helix</keyword>